<name>SYK_STAA8</name>
<gene>
    <name evidence="1" type="primary">lysS</name>
    <name type="ordered locus">SAOUHSC_00493</name>
</gene>
<reference key="1">
    <citation type="book" date="2006" name="Gram positive pathogens, 2nd edition">
        <title>The Staphylococcus aureus NCTC 8325 genome.</title>
        <editorList>
            <person name="Fischetti V."/>
            <person name="Novick R."/>
            <person name="Ferretti J."/>
            <person name="Portnoy D."/>
            <person name="Rood J."/>
        </editorList>
        <authorList>
            <person name="Gillaspy A.F."/>
            <person name="Worrell V."/>
            <person name="Orvis J."/>
            <person name="Roe B.A."/>
            <person name="Dyer D.W."/>
            <person name="Iandolo J.J."/>
        </authorList>
    </citation>
    <scope>NUCLEOTIDE SEQUENCE [LARGE SCALE GENOMIC DNA]</scope>
    <source>
        <strain>NCTC 8325 / PS 47</strain>
    </source>
</reference>
<feature type="chain" id="PRO_1000012941" description="Lysine--tRNA ligase">
    <location>
        <begin position="1"/>
        <end position="495"/>
    </location>
</feature>
<feature type="binding site" evidence="1">
    <location>
        <position position="406"/>
    </location>
    <ligand>
        <name>Mg(2+)</name>
        <dbReference type="ChEBI" id="CHEBI:18420"/>
        <label>1</label>
    </ligand>
</feature>
<feature type="binding site" evidence="1">
    <location>
        <position position="413"/>
    </location>
    <ligand>
        <name>Mg(2+)</name>
        <dbReference type="ChEBI" id="CHEBI:18420"/>
        <label>1</label>
    </ligand>
</feature>
<feature type="binding site" evidence="1">
    <location>
        <position position="413"/>
    </location>
    <ligand>
        <name>Mg(2+)</name>
        <dbReference type="ChEBI" id="CHEBI:18420"/>
        <label>2</label>
    </ligand>
</feature>
<proteinExistence type="inferred from homology"/>
<comment type="catalytic activity">
    <reaction evidence="1">
        <text>tRNA(Lys) + L-lysine + ATP = L-lysyl-tRNA(Lys) + AMP + diphosphate</text>
        <dbReference type="Rhea" id="RHEA:20792"/>
        <dbReference type="Rhea" id="RHEA-COMP:9696"/>
        <dbReference type="Rhea" id="RHEA-COMP:9697"/>
        <dbReference type="ChEBI" id="CHEBI:30616"/>
        <dbReference type="ChEBI" id="CHEBI:32551"/>
        <dbReference type="ChEBI" id="CHEBI:33019"/>
        <dbReference type="ChEBI" id="CHEBI:78442"/>
        <dbReference type="ChEBI" id="CHEBI:78529"/>
        <dbReference type="ChEBI" id="CHEBI:456215"/>
        <dbReference type="EC" id="6.1.1.6"/>
    </reaction>
</comment>
<comment type="cofactor">
    <cofactor evidence="1">
        <name>Mg(2+)</name>
        <dbReference type="ChEBI" id="CHEBI:18420"/>
    </cofactor>
    <text evidence="1">Binds 3 Mg(2+) ions per subunit.</text>
</comment>
<comment type="subunit">
    <text evidence="1">Homodimer.</text>
</comment>
<comment type="subcellular location">
    <subcellularLocation>
        <location evidence="1">Cytoplasm</location>
    </subcellularLocation>
</comment>
<comment type="similarity">
    <text evidence="1">Belongs to the class-II aminoacyl-tRNA synthetase family.</text>
</comment>
<accession>Q2G0Q3</accession>
<keyword id="KW-0030">Aminoacyl-tRNA synthetase</keyword>
<keyword id="KW-0067">ATP-binding</keyword>
<keyword id="KW-0963">Cytoplasm</keyword>
<keyword id="KW-0436">Ligase</keyword>
<keyword id="KW-0460">Magnesium</keyword>
<keyword id="KW-0479">Metal-binding</keyword>
<keyword id="KW-0547">Nucleotide-binding</keyword>
<keyword id="KW-0648">Protein biosynthesis</keyword>
<keyword id="KW-1185">Reference proteome</keyword>
<protein>
    <recommendedName>
        <fullName evidence="1">Lysine--tRNA ligase</fullName>
        <ecNumber evidence="1">6.1.1.6</ecNumber>
    </recommendedName>
    <alternativeName>
        <fullName evidence="1">Lysyl-tRNA synthetase</fullName>
        <shortName evidence="1">LysRS</shortName>
    </alternativeName>
</protein>
<sequence length="495" mass="56719">MSEEMNDQMLVRRQKLQELYDLGIDPFGSKFDRSGLSSDLKEEWDQYSKEELVEKEADSHVAIAGRLMTKRGKGKAGFAHVQDLAGQIQIYVRKDQVGDDEFDLWKNADLGDIVGVEGVMFKTNTGELSVKAKKFTLLTKSLRPLPDKFHGLQDIEQRYRQRYLDLITNEDSTRTFINRSKIIQEMRNYLNNKGFLEVETPMMHQIAGGAAARPFVTHHNALDATLYMRIAIELHLKRLIVGGLEKVYEIGRVFRNEGVSTRHNPEFTMIELYEAYADYHDIMDLTESMVRHIANEVLGSAKVQYNGETIDLESAWTRLHIVDAVKEATGVDFYEVKSDEEAKALAKEHGIEIKDTMKYGHILNEFFEQKVEETLIQPTFIYGHPTEISPLAKKNPEDPRFTDRFELFIVGREHANAFTELNDPIDQKGRFEAQLVEKAQGNDEAHEMDEDYIEALEYGMPPTGGLGIGIDRLVMLLTDSPSIRDVLLFPYMRQK</sequence>
<evidence type="ECO:0000255" key="1">
    <source>
        <dbReference type="HAMAP-Rule" id="MF_00252"/>
    </source>
</evidence>
<organism>
    <name type="scientific">Staphylococcus aureus (strain NCTC 8325 / PS 47)</name>
    <dbReference type="NCBI Taxonomy" id="93061"/>
    <lineage>
        <taxon>Bacteria</taxon>
        <taxon>Bacillati</taxon>
        <taxon>Bacillota</taxon>
        <taxon>Bacilli</taxon>
        <taxon>Bacillales</taxon>
        <taxon>Staphylococcaceae</taxon>
        <taxon>Staphylococcus</taxon>
    </lineage>
</organism>
<dbReference type="EC" id="6.1.1.6" evidence="1"/>
<dbReference type="EMBL" id="CP000253">
    <property type="protein sequence ID" value="ABD29646.1"/>
    <property type="molecule type" value="Genomic_DNA"/>
</dbReference>
<dbReference type="RefSeq" id="WP_001288202.1">
    <property type="nucleotide sequence ID" value="NZ_LS483365.1"/>
</dbReference>
<dbReference type="RefSeq" id="YP_499070.1">
    <property type="nucleotide sequence ID" value="NC_007795.1"/>
</dbReference>
<dbReference type="SMR" id="Q2G0Q3"/>
<dbReference type="STRING" id="93061.SAOUHSC_00493"/>
<dbReference type="PaxDb" id="1280-SAXN108_0569"/>
<dbReference type="GeneID" id="3920409"/>
<dbReference type="GeneID" id="98344832"/>
<dbReference type="KEGG" id="sao:SAOUHSC_00493"/>
<dbReference type="PATRIC" id="fig|93061.5.peg.444"/>
<dbReference type="eggNOG" id="COG1190">
    <property type="taxonomic scope" value="Bacteria"/>
</dbReference>
<dbReference type="HOGENOM" id="CLU_008255_6_0_9"/>
<dbReference type="OrthoDB" id="9801152at2"/>
<dbReference type="PRO" id="PR:Q2G0Q3"/>
<dbReference type="Proteomes" id="UP000008816">
    <property type="component" value="Chromosome"/>
</dbReference>
<dbReference type="GO" id="GO:0005737">
    <property type="term" value="C:cytoplasm"/>
    <property type="evidence" value="ECO:0000318"/>
    <property type="project" value="GO_Central"/>
</dbReference>
<dbReference type="GO" id="GO:0005829">
    <property type="term" value="C:cytosol"/>
    <property type="evidence" value="ECO:0000318"/>
    <property type="project" value="GO_Central"/>
</dbReference>
<dbReference type="GO" id="GO:0005524">
    <property type="term" value="F:ATP binding"/>
    <property type="evidence" value="ECO:0007669"/>
    <property type="project" value="UniProtKB-UniRule"/>
</dbReference>
<dbReference type="GO" id="GO:0140096">
    <property type="term" value="F:catalytic activity, acting on a protein"/>
    <property type="evidence" value="ECO:0007669"/>
    <property type="project" value="UniProtKB-ARBA"/>
</dbReference>
<dbReference type="GO" id="GO:0004824">
    <property type="term" value="F:lysine-tRNA ligase activity"/>
    <property type="evidence" value="ECO:0000318"/>
    <property type="project" value="GO_Central"/>
</dbReference>
<dbReference type="GO" id="GO:0000287">
    <property type="term" value="F:magnesium ion binding"/>
    <property type="evidence" value="ECO:0007669"/>
    <property type="project" value="UniProtKB-UniRule"/>
</dbReference>
<dbReference type="GO" id="GO:0016740">
    <property type="term" value="F:transferase activity"/>
    <property type="evidence" value="ECO:0007669"/>
    <property type="project" value="UniProtKB-ARBA"/>
</dbReference>
<dbReference type="GO" id="GO:0000049">
    <property type="term" value="F:tRNA binding"/>
    <property type="evidence" value="ECO:0000318"/>
    <property type="project" value="GO_Central"/>
</dbReference>
<dbReference type="GO" id="GO:0006430">
    <property type="term" value="P:lysyl-tRNA aminoacylation"/>
    <property type="evidence" value="ECO:0000318"/>
    <property type="project" value="GO_Central"/>
</dbReference>
<dbReference type="CDD" id="cd00775">
    <property type="entry name" value="LysRS_core"/>
    <property type="match status" value="1"/>
</dbReference>
<dbReference type="CDD" id="cd04322">
    <property type="entry name" value="LysRS_N"/>
    <property type="match status" value="1"/>
</dbReference>
<dbReference type="FunFam" id="2.40.50.140:FF:000024">
    <property type="entry name" value="Lysine--tRNA ligase"/>
    <property type="match status" value="1"/>
</dbReference>
<dbReference type="FunFam" id="3.30.930.10:FF:000001">
    <property type="entry name" value="Lysine--tRNA ligase"/>
    <property type="match status" value="1"/>
</dbReference>
<dbReference type="Gene3D" id="3.30.930.10">
    <property type="entry name" value="Bira Bifunctional Protein, Domain 2"/>
    <property type="match status" value="1"/>
</dbReference>
<dbReference type="Gene3D" id="2.40.50.140">
    <property type="entry name" value="Nucleic acid-binding proteins"/>
    <property type="match status" value="1"/>
</dbReference>
<dbReference type="HAMAP" id="MF_00252">
    <property type="entry name" value="Lys_tRNA_synth_class2"/>
    <property type="match status" value="1"/>
</dbReference>
<dbReference type="InterPro" id="IPR004364">
    <property type="entry name" value="Aa-tRNA-synt_II"/>
</dbReference>
<dbReference type="InterPro" id="IPR006195">
    <property type="entry name" value="aa-tRNA-synth_II"/>
</dbReference>
<dbReference type="InterPro" id="IPR045864">
    <property type="entry name" value="aa-tRNA-synth_II/BPL/LPL"/>
</dbReference>
<dbReference type="InterPro" id="IPR002313">
    <property type="entry name" value="Lys-tRNA-ligase_II"/>
</dbReference>
<dbReference type="InterPro" id="IPR034762">
    <property type="entry name" value="Lys-tRNA-ligase_II_bac/euk"/>
</dbReference>
<dbReference type="InterPro" id="IPR044136">
    <property type="entry name" value="Lys-tRNA-ligase_II_N"/>
</dbReference>
<dbReference type="InterPro" id="IPR018149">
    <property type="entry name" value="Lys-tRNA-synth_II_C"/>
</dbReference>
<dbReference type="InterPro" id="IPR012340">
    <property type="entry name" value="NA-bd_OB-fold"/>
</dbReference>
<dbReference type="InterPro" id="IPR004365">
    <property type="entry name" value="NA-bd_OB_tRNA"/>
</dbReference>
<dbReference type="NCBIfam" id="TIGR00499">
    <property type="entry name" value="lysS_bact"/>
    <property type="match status" value="1"/>
</dbReference>
<dbReference type="NCBIfam" id="NF001756">
    <property type="entry name" value="PRK00484.1"/>
    <property type="match status" value="1"/>
</dbReference>
<dbReference type="PANTHER" id="PTHR42918:SF15">
    <property type="entry name" value="LYSINE--TRNA LIGASE, CHLOROPLASTIC_MITOCHONDRIAL"/>
    <property type="match status" value="1"/>
</dbReference>
<dbReference type="PANTHER" id="PTHR42918">
    <property type="entry name" value="LYSYL-TRNA SYNTHETASE"/>
    <property type="match status" value="1"/>
</dbReference>
<dbReference type="Pfam" id="PF00152">
    <property type="entry name" value="tRNA-synt_2"/>
    <property type="match status" value="1"/>
</dbReference>
<dbReference type="Pfam" id="PF01336">
    <property type="entry name" value="tRNA_anti-codon"/>
    <property type="match status" value="1"/>
</dbReference>
<dbReference type="PIRSF" id="PIRSF039101">
    <property type="entry name" value="LysRS2"/>
    <property type="match status" value="1"/>
</dbReference>
<dbReference type="PRINTS" id="PR00982">
    <property type="entry name" value="TRNASYNTHLYS"/>
</dbReference>
<dbReference type="SUPFAM" id="SSF55681">
    <property type="entry name" value="Class II aaRS and biotin synthetases"/>
    <property type="match status" value="1"/>
</dbReference>
<dbReference type="SUPFAM" id="SSF50249">
    <property type="entry name" value="Nucleic acid-binding proteins"/>
    <property type="match status" value="1"/>
</dbReference>
<dbReference type="PROSITE" id="PS50862">
    <property type="entry name" value="AA_TRNA_LIGASE_II"/>
    <property type="match status" value="1"/>
</dbReference>